<gene>
    <name evidence="7" type="primary">Snup</name>
    <name evidence="7" type="ORF">CG42303</name>
</gene>
<reference evidence="8" key="1">
    <citation type="journal article" date="2000" name="Science">
        <title>The genome sequence of Drosophila melanogaster.</title>
        <authorList>
            <person name="Adams M.D."/>
            <person name="Celniker S.E."/>
            <person name="Holt R.A."/>
            <person name="Evans C.A."/>
            <person name="Gocayne J.D."/>
            <person name="Amanatides P.G."/>
            <person name="Scherer S.E."/>
            <person name="Li P.W."/>
            <person name="Hoskins R.A."/>
            <person name="Galle R.F."/>
            <person name="George R.A."/>
            <person name="Lewis S.E."/>
            <person name="Richards S."/>
            <person name="Ashburner M."/>
            <person name="Henderson S.N."/>
            <person name="Sutton G.G."/>
            <person name="Wortman J.R."/>
            <person name="Yandell M.D."/>
            <person name="Zhang Q."/>
            <person name="Chen L.X."/>
            <person name="Brandon R.C."/>
            <person name="Rogers Y.-H.C."/>
            <person name="Blazej R.G."/>
            <person name="Champe M."/>
            <person name="Pfeiffer B.D."/>
            <person name="Wan K.H."/>
            <person name="Doyle C."/>
            <person name="Baxter E.G."/>
            <person name="Helt G."/>
            <person name="Nelson C.R."/>
            <person name="Miklos G.L.G."/>
            <person name="Abril J.F."/>
            <person name="Agbayani A."/>
            <person name="An H.-J."/>
            <person name="Andrews-Pfannkoch C."/>
            <person name="Baldwin D."/>
            <person name="Ballew R.M."/>
            <person name="Basu A."/>
            <person name="Baxendale J."/>
            <person name="Bayraktaroglu L."/>
            <person name="Beasley E.M."/>
            <person name="Beeson K.Y."/>
            <person name="Benos P.V."/>
            <person name="Berman B.P."/>
            <person name="Bhandari D."/>
            <person name="Bolshakov S."/>
            <person name="Borkova D."/>
            <person name="Botchan M.R."/>
            <person name="Bouck J."/>
            <person name="Brokstein P."/>
            <person name="Brottier P."/>
            <person name="Burtis K.C."/>
            <person name="Busam D.A."/>
            <person name="Butler H."/>
            <person name="Cadieu E."/>
            <person name="Center A."/>
            <person name="Chandra I."/>
            <person name="Cherry J.M."/>
            <person name="Cawley S."/>
            <person name="Dahlke C."/>
            <person name="Davenport L.B."/>
            <person name="Davies P."/>
            <person name="de Pablos B."/>
            <person name="Delcher A."/>
            <person name="Deng Z."/>
            <person name="Mays A.D."/>
            <person name="Dew I."/>
            <person name="Dietz S.M."/>
            <person name="Dodson K."/>
            <person name="Doup L.E."/>
            <person name="Downes M."/>
            <person name="Dugan-Rocha S."/>
            <person name="Dunkov B.C."/>
            <person name="Dunn P."/>
            <person name="Durbin K.J."/>
            <person name="Evangelista C.C."/>
            <person name="Ferraz C."/>
            <person name="Ferriera S."/>
            <person name="Fleischmann W."/>
            <person name="Fosler C."/>
            <person name="Gabrielian A.E."/>
            <person name="Garg N.S."/>
            <person name="Gelbart W.M."/>
            <person name="Glasser K."/>
            <person name="Glodek A."/>
            <person name="Gong F."/>
            <person name="Gorrell J.H."/>
            <person name="Gu Z."/>
            <person name="Guan P."/>
            <person name="Harris M."/>
            <person name="Harris N.L."/>
            <person name="Harvey D.A."/>
            <person name="Heiman T.J."/>
            <person name="Hernandez J.R."/>
            <person name="Houck J."/>
            <person name="Hostin D."/>
            <person name="Houston K.A."/>
            <person name="Howland T.J."/>
            <person name="Wei M.-H."/>
            <person name="Ibegwam C."/>
            <person name="Jalali M."/>
            <person name="Kalush F."/>
            <person name="Karpen G.H."/>
            <person name="Ke Z."/>
            <person name="Kennison J.A."/>
            <person name="Ketchum K.A."/>
            <person name="Kimmel B.E."/>
            <person name="Kodira C.D."/>
            <person name="Kraft C.L."/>
            <person name="Kravitz S."/>
            <person name="Kulp D."/>
            <person name="Lai Z."/>
            <person name="Lasko P."/>
            <person name="Lei Y."/>
            <person name="Levitsky A.A."/>
            <person name="Li J.H."/>
            <person name="Li Z."/>
            <person name="Liang Y."/>
            <person name="Lin X."/>
            <person name="Liu X."/>
            <person name="Mattei B."/>
            <person name="McIntosh T.C."/>
            <person name="McLeod M.P."/>
            <person name="McPherson D."/>
            <person name="Merkulov G."/>
            <person name="Milshina N.V."/>
            <person name="Mobarry C."/>
            <person name="Morris J."/>
            <person name="Moshrefi A."/>
            <person name="Mount S.M."/>
            <person name="Moy M."/>
            <person name="Murphy B."/>
            <person name="Murphy L."/>
            <person name="Muzny D.M."/>
            <person name="Nelson D.L."/>
            <person name="Nelson D.R."/>
            <person name="Nelson K.A."/>
            <person name="Nixon K."/>
            <person name="Nusskern D.R."/>
            <person name="Pacleb J.M."/>
            <person name="Palazzolo M."/>
            <person name="Pittman G.S."/>
            <person name="Pan S."/>
            <person name="Pollard J."/>
            <person name="Puri V."/>
            <person name="Reese M.G."/>
            <person name="Reinert K."/>
            <person name="Remington K."/>
            <person name="Saunders R.D.C."/>
            <person name="Scheeler F."/>
            <person name="Shen H."/>
            <person name="Shue B.C."/>
            <person name="Siden-Kiamos I."/>
            <person name="Simpson M."/>
            <person name="Skupski M.P."/>
            <person name="Smith T.J."/>
            <person name="Spier E."/>
            <person name="Spradling A.C."/>
            <person name="Stapleton M."/>
            <person name="Strong R."/>
            <person name="Sun E."/>
            <person name="Svirskas R."/>
            <person name="Tector C."/>
            <person name="Turner R."/>
            <person name="Venter E."/>
            <person name="Wang A.H."/>
            <person name="Wang X."/>
            <person name="Wang Z.-Y."/>
            <person name="Wassarman D.A."/>
            <person name="Weinstock G.M."/>
            <person name="Weissenbach J."/>
            <person name="Williams S.M."/>
            <person name="Woodage T."/>
            <person name="Worley K.C."/>
            <person name="Wu D."/>
            <person name="Yang S."/>
            <person name="Yao Q.A."/>
            <person name="Ye J."/>
            <person name="Yeh R.-F."/>
            <person name="Zaveri J.S."/>
            <person name="Zhan M."/>
            <person name="Zhang G."/>
            <person name="Zhao Q."/>
            <person name="Zheng L."/>
            <person name="Zheng X.H."/>
            <person name="Zhong F.N."/>
            <person name="Zhong W."/>
            <person name="Zhou X."/>
            <person name="Zhu S.C."/>
            <person name="Zhu X."/>
            <person name="Smith H.O."/>
            <person name="Gibbs R.A."/>
            <person name="Myers E.W."/>
            <person name="Rubin G.M."/>
            <person name="Venter J.C."/>
        </authorList>
    </citation>
    <scope>NUCLEOTIDE SEQUENCE [LARGE SCALE GENOMIC DNA]</scope>
    <source>
        <strain evidence="8">Berkeley</strain>
    </source>
</reference>
<reference evidence="8" key="2">
    <citation type="journal article" date="2002" name="Genome Biol.">
        <title>Annotation of the Drosophila melanogaster euchromatic genome: a systematic review.</title>
        <authorList>
            <person name="Misra S."/>
            <person name="Crosby M.A."/>
            <person name="Mungall C.J."/>
            <person name="Matthews B.B."/>
            <person name="Campbell K.S."/>
            <person name="Hradecky P."/>
            <person name="Huang Y."/>
            <person name="Kaminker J.S."/>
            <person name="Millburn G.H."/>
            <person name="Prochnik S.E."/>
            <person name="Smith C.D."/>
            <person name="Tupy J.L."/>
            <person name="Whitfield E.J."/>
            <person name="Bayraktaroglu L."/>
            <person name="Berman B.P."/>
            <person name="Bettencourt B.R."/>
            <person name="Celniker S.E."/>
            <person name="de Grey A.D.N.J."/>
            <person name="Drysdale R.A."/>
            <person name="Harris N.L."/>
            <person name="Richter J."/>
            <person name="Russo S."/>
            <person name="Schroeder A.J."/>
            <person name="Shu S.Q."/>
            <person name="Stapleton M."/>
            <person name="Yamada C."/>
            <person name="Ashburner M."/>
            <person name="Gelbart W.M."/>
            <person name="Rubin G.M."/>
            <person name="Lewis S.E."/>
        </authorList>
    </citation>
    <scope>GENOME REANNOTATION</scope>
    <source>
        <strain evidence="8">Berkeley</strain>
    </source>
</reference>
<reference evidence="5" key="3">
    <citation type="journal article" date="2013" name="Mol. Biol. Cell">
        <title>Identification and characterization of Drosophila Snurportin reveals a role for the import receptor Moleskin/Importin7 in snRNP biogenesis.</title>
        <authorList>
            <person name="Natalizio A.H."/>
            <person name="Matera A.G."/>
        </authorList>
    </citation>
    <scope>INTERACTION WITH MSK; SMB AND SMN</scope>
    <scope>SUBCELLULAR LOCATION</scope>
    <scope>DEVELOPMENTAL STAGE</scope>
</reference>
<proteinExistence type="evidence at protein level"/>
<keyword id="KW-0175">Coiled coil</keyword>
<keyword id="KW-0963">Cytoplasm</keyword>
<keyword id="KW-0539">Nucleus</keyword>
<keyword id="KW-1185">Reference proteome</keyword>
<keyword id="KW-0694">RNA-binding</keyword>
<keyword id="KW-0813">Transport</keyword>
<comment type="function">
    <text evidence="1">Functions as an U snRNP-specific nuclear import adapter. Involved in the trimethylguanosine (m3G)-cap-dependent nuclear import of U snRNPs. Binds specifically to the terminal m3G-cap U snRNAs.</text>
</comment>
<comment type="subunit">
    <text evidence="4">Interacts with components of the snRNP complex including SmB and Smn; these interactions are RNA-dependent. Interacts with importin-7 msk but not with importin subunit beta Fs(2)Ket; the interaction is RNA-dependent.</text>
</comment>
<comment type="subcellular location">
    <subcellularLocation>
        <location evidence="4">Nucleus</location>
    </subcellularLocation>
    <subcellularLocation>
        <location evidence="4">Cytoplasm</location>
    </subcellularLocation>
    <subcellularLocation>
        <location evidence="4">Cytoplasm</location>
        <location evidence="4">U-body</location>
    </subcellularLocation>
    <subcellularLocation>
        <location evidence="4">Nucleus speckle</location>
    </subcellularLocation>
    <subcellularLocation>
        <location evidence="4">Nucleus</location>
        <location evidence="4">Cajal body</location>
    </subcellularLocation>
    <text evidence="4">Mostly localized to the nuclear periphery. In Malpighian tubule cells, detected in nuclear foci that include the Cajal bodies. Accumulates in the U bodies of the follicle and nurse cells.</text>
</comment>
<comment type="developmental stage">
    <text evidence="4">Expressed throughout development and in adults, with highest levels of expression during embryogenesis.</text>
</comment>
<comment type="similarity">
    <text evidence="5">Belongs to the snurportin family.</text>
</comment>
<name>SPN1_DROME</name>
<feature type="chain" id="PRO_0000436527" description="Snurportin-1" evidence="5">
    <location>
        <begin position="1"/>
        <end position="351"/>
    </location>
</feature>
<feature type="region of interest" description="Disordered" evidence="3">
    <location>
        <begin position="1"/>
        <end position="66"/>
    </location>
</feature>
<feature type="region of interest" description="Disordered" evidence="3">
    <location>
        <begin position="294"/>
        <end position="322"/>
    </location>
</feature>
<feature type="coiled-coil region" evidence="2">
    <location>
        <begin position="274"/>
        <end position="330"/>
    </location>
</feature>
<feature type="compositionally biased region" description="Basic and acidic residues" evidence="3">
    <location>
        <begin position="8"/>
        <end position="42"/>
    </location>
</feature>
<feature type="compositionally biased region" description="Basic residues" evidence="3">
    <location>
        <begin position="52"/>
        <end position="62"/>
    </location>
</feature>
<feature type="compositionally biased region" description="Basic and acidic residues" evidence="3">
    <location>
        <begin position="294"/>
        <end position="310"/>
    </location>
</feature>
<feature type="compositionally biased region" description="Acidic residues" evidence="3">
    <location>
        <begin position="311"/>
        <end position="320"/>
    </location>
</feature>
<dbReference type="EMBL" id="AE014296">
    <property type="protein sequence ID" value="ACL83233.1"/>
    <property type="molecule type" value="Genomic_DNA"/>
</dbReference>
<dbReference type="RefSeq" id="NP_001137877.1">
    <property type="nucleotide sequence ID" value="NM_001144405.3"/>
</dbReference>
<dbReference type="SMR" id="B7Z0I7"/>
<dbReference type="FunCoup" id="B7Z0I7">
    <property type="interactions" value="935"/>
</dbReference>
<dbReference type="STRING" id="7227.FBpp0288961"/>
<dbReference type="PaxDb" id="7227-FBpp0288961"/>
<dbReference type="EnsemblMetazoa" id="FBtr0299683">
    <property type="protein sequence ID" value="FBpp0288961"/>
    <property type="gene ID" value="FBgn0259199"/>
</dbReference>
<dbReference type="GeneID" id="7354429"/>
<dbReference type="KEGG" id="dme:Dmel_CG42303"/>
<dbReference type="AGR" id="FB:FBgn0259199"/>
<dbReference type="CTD" id="7354429"/>
<dbReference type="FlyBase" id="FBgn0259199">
    <property type="gene designation" value="Snup"/>
</dbReference>
<dbReference type="VEuPathDB" id="VectorBase:FBgn0259199"/>
<dbReference type="eggNOG" id="KOG3132">
    <property type="taxonomic scope" value="Eukaryota"/>
</dbReference>
<dbReference type="GeneTree" id="ENSGT00510000047494"/>
<dbReference type="HOGENOM" id="CLU_056809_0_0_1"/>
<dbReference type="InParanoid" id="B7Z0I7"/>
<dbReference type="OMA" id="ENWIMVP"/>
<dbReference type="OrthoDB" id="10003593at2759"/>
<dbReference type="PhylomeDB" id="B7Z0I7"/>
<dbReference type="BioGRID-ORCS" id="7354429">
    <property type="hits" value="1 hit in 1 CRISPR screen"/>
</dbReference>
<dbReference type="GenomeRNAi" id="7354429"/>
<dbReference type="PRO" id="PR:B7Z0I7"/>
<dbReference type="Proteomes" id="UP000000803">
    <property type="component" value="Chromosome 3L"/>
</dbReference>
<dbReference type="Bgee" id="FBgn0259199">
    <property type="expression patterns" value="Expressed in ovary and 3 other cell types or tissues"/>
</dbReference>
<dbReference type="GO" id="GO:0015030">
    <property type="term" value="C:Cajal body"/>
    <property type="evidence" value="ECO:0000314"/>
    <property type="project" value="FlyBase"/>
</dbReference>
<dbReference type="GO" id="GO:0071254">
    <property type="term" value="C:cytoplasmic U snRNP body"/>
    <property type="evidence" value="ECO:0000314"/>
    <property type="project" value="FlyBase"/>
</dbReference>
<dbReference type="GO" id="GO:0016607">
    <property type="term" value="C:nuclear speck"/>
    <property type="evidence" value="ECO:0007669"/>
    <property type="project" value="UniProtKB-SubCell"/>
</dbReference>
<dbReference type="GO" id="GO:0030619">
    <property type="term" value="F:U1 snRNA binding"/>
    <property type="evidence" value="ECO:0000314"/>
    <property type="project" value="FlyBase"/>
</dbReference>
<dbReference type="GO" id="GO:0030620">
    <property type="term" value="F:U2 snRNA binding"/>
    <property type="evidence" value="ECO:0000314"/>
    <property type="project" value="FlyBase"/>
</dbReference>
<dbReference type="GO" id="GO:0030621">
    <property type="term" value="F:U4 snRNA binding"/>
    <property type="evidence" value="ECO:0000314"/>
    <property type="project" value="FlyBase"/>
</dbReference>
<dbReference type="GO" id="GO:0061015">
    <property type="term" value="P:snRNA import into nucleus"/>
    <property type="evidence" value="ECO:0007669"/>
    <property type="project" value="InterPro"/>
</dbReference>
<dbReference type="CDD" id="cd09232">
    <property type="entry name" value="Snurportin-1_C"/>
    <property type="match status" value="1"/>
</dbReference>
<dbReference type="Gene3D" id="3.30.470.30">
    <property type="entry name" value="DNA ligase/mRNA capping enzyme"/>
    <property type="match status" value="1"/>
</dbReference>
<dbReference type="InterPro" id="IPR017336">
    <property type="entry name" value="Snurportin-1"/>
</dbReference>
<dbReference type="InterPro" id="IPR047857">
    <property type="entry name" value="Snurportin1_C"/>
</dbReference>
<dbReference type="PANTHER" id="PTHR13403:SF6">
    <property type="entry name" value="SNURPORTIN-1"/>
    <property type="match status" value="1"/>
</dbReference>
<dbReference type="PANTHER" id="PTHR13403">
    <property type="entry name" value="SNURPORTIN1 RNUT1 PROTEIN RNA, U TRANSPORTER 1"/>
    <property type="match status" value="1"/>
</dbReference>
<dbReference type="Pfam" id="PF21974">
    <property type="entry name" value="SPN1_m3Gcap_bd"/>
    <property type="match status" value="1"/>
</dbReference>
<dbReference type="SUPFAM" id="SSF56091">
    <property type="entry name" value="DNA ligase/mRNA capping enzyme, catalytic domain"/>
    <property type="match status" value="1"/>
</dbReference>
<evidence type="ECO:0000250" key="1">
    <source>
        <dbReference type="UniProtKB" id="O95149"/>
    </source>
</evidence>
<evidence type="ECO:0000255" key="2"/>
<evidence type="ECO:0000256" key="3">
    <source>
        <dbReference type="SAM" id="MobiDB-lite"/>
    </source>
</evidence>
<evidence type="ECO:0000269" key="4">
    <source>
    </source>
</evidence>
<evidence type="ECO:0000305" key="5"/>
<evidence type="ECO:0000305" key="6">
    <source>
    </source>
</evidence>
<evidence type="ECO:0000312" key="7">
    <source>
        <dbReference type="FlyBase" id="FBgn0259199"/>
    </source>
</evidence>
<evidence type="ECO:0000312" key="8">
    <source>
        <dbReference type="Proteomes" id="UP000000803"/>
    </source>
</evidence>
<accession>B7Z0I7</accession>
<protein>
    <recommendedName>
        <fullName evidence="6">Snurportin-1</fullName>
    </recommendedName>
</protein>
<organism evidence="8">
    <name type="scientific">Drosophila melanogaster</name>
    <name type="common">Fruit fly</name>
    <dbReference type="NCBI Taxonomy" id="7227"/>
    <lineage>
        <taxon>Eukaryota</taxon>
        <taxon>Metazoa</taxon>
        <taxon>Ecdysozoa</taxon>
        <taxon>Arthropoda</taxon>
        <taxon>Hexapoda</taxon>
        <taxon>Insecta</taxon>
        <taxon>Pterygota</taxon>
        <taxon>Neoptera</taxon>
        <taxon>Endopterygota</taxon>
        <taxon>Diptera</taxon>
        <taxon>Brachycera</taxon>
        <taxon>Muscomorpha</taxon>
        <taxon>Ephydroidea</taxon>
        <taxon>Drosophilidae</taxon>
        <taxon>Drosophila</taxon>
        <taxon>Sophophora</taxon>
    </lineage>
</organism>
<sequence length="351" mass="41504">MESSFQELYKKGLDIGEQQKQRQKELLKQQKLRRQQEQDDYRPLQNQEKPVPRKKSGKRSGHQKGIPYRPQLSEWLRHKPDDLNEWLLVPCPVGKRCLVVASKGITKAYSKGGWMFVNFRSSLPGDWQLQKGETILDCVYVEDADTFYVLDAISFGLQEVQECEASFRFYWLRARFEEHDYDKISENNEKKFKLLDHFDFEDPSAVEQALHKYPFFPENKPDLDGFLFYHKEASYVCRETPLVCWLFPFMMEDVLGLPVNKCYKAPEDYQPSHVLQYMDAFEQKLAEHRRTLKEQKKKVNEQKEDPHTMEAEEDVESDEYDSLKRVLDQQRRLELGEFDMDCAEPPSADGC</sequence>